<comment type="catalytic activity">
    <reaction>
        <text>DNA(n) + a 2'-deoxyribonucleoside 5'-triphosphate = DNA(n+1) + diphosphate</text>
        <dbReference type="Rhea" id="RHEA:22508"/>
        <dbReference type="Rhea" id="RHEA-COMP:17339"/>
        <dbReference type="Rhea" id="RHEA-COMP:17340"/>
        <dbReference type="ChEBI" id="CHEBI:33019"/>
        <dbReference type="ChEBI" id="CHEBI:61560"/>
        <dbReference type="ChEBI" id="CHEBI:173112"/>
        <dbReference type="EC" id="2.7.7.7"/>
    </reaction>
</comment>
<comment type="similarity">
    <text evidence="1">Belongs to the DNA polymerase type-B family.</text>
</comment>
<proteinExistence type="inferred from homology"/>
<reference key="1">
    <citation type="journal article" date="2000" name="DNA Res.">
        <title>Sequence analysis of three family B DNA polymerases from the thermoacidophilic crenarchaeon Sulfurisphaera ohwakuensis.</title>
        <authorList>
            <person name="Iwai T."/>
            <person name="Kurosawa N."/>
            <person name="Itoh Y.H."/>
            <person name="Kimura N."/>
            <person name="Horiuchi T."/>
        </authorList>
    </citation>
    <scope>NUCLEOTIDE SEQUENCE [GENOMIC DNA]</scope>
    <source>
        <strain>TA-1</strain>
    </source>
</reference>
<accession>O50607</accession>
<sequence>MARQITLFDFTLKKEQNKDESRKEEIPHANINEERRKPKEWIKEAEEGKSYFLLQVDYDGKKSKAICKLYDKETKKIYILYDNTGHKPYFLTDIDPEKVNKIPKVVRDPSFDHLETVIKIDPYSGNKIKLTKIVVKDPLAVRRMRNSVPKAYEAHIKYFNNYIYDLGLIPGLPYVVKKGKLEQLRPELKGEEVDEIRKAFADSDEMTKEAVNDWIPIFESEVPDVKRVAIDIEVYTPIKGRIPDPEKAEFPIISISLAGNDGTKRVLVLLREDVNSQITKHDVIVETFKSERELIRRFFDIILDYPIILTFNGDDFDIPYIYYRALKLNFTPEEIPFDIINDEGKYLAGIHIDLYKFFFNRAIRNYAFEGKYNEYNLDAVATALLGMSKVKLDTLISFLDLDKLIEYNSRDAEITLKLTTFNNNLVWKLIILLARISKMGLEELTRTEVSTWIKNLYYWEHRRRNWLIPLKEEILTRSSQIKTAAIIKGKRYKGAVVIDPPAGVFFNVVVLDFASLYPSIIRNWNISYETVDVENCKNKEYVRDETGEVLHYICKDKPGITAVITGLLRDFRVKVYKKKAKSQNISEEQRSVYDVVQRAMKVFINATYGVFGAENFPLYAPAVAESVTAIGRYVITTTVNYCRSIGLQVLYGDTDSMFLWNPSKEKLEEIIKFVKGKFGLDLEVDKVYKFVAFSGLKKNYLGVYPDGKTDIKGMLAKKRNTPEFIKKEFNEVKQLVTTINSPDDIPKIRDQLEYKIKEIYEKLRHKGYNLDELAFRVMLSKPLESYTKNTPQHVKAALQLRSYGVMVLPRDIIMFVKVKSKDGVKPVQLAKLSEIDVDKYIDAVRSTFEQILKAFGLIGANLLQLLSILSLT</sequence>
<keyword id="KW-0235">DNA replication</keyword>
<keyword id="KW-0238">DNA-binding</keyword>
<keyword id="KW-0239">DNA-directed DNA polymerase</keyword>
<keyword id="KW-0548">Nucleotidyltransferase</keyword>
<keyword id="KW-0808">Transferase</keyword>
<evidence type="ECO:0000305" key="1"/>
<dbReference type="EC" id="2.7.7.7"/>
<dbReference type="EMBL" id="AB008894">
    <property type="protein sequence ID" value="BAA23994.1"/>
    <property type="molecule type" value="Genomic_DNA"/>
</dbReference>
<dbReference type="PIR" id="JC7380">
    <property type="entry name" value="JC7380"/>
</dbReference>
<dbReference type="SMR" id="O50607"/>
<dbReference type="BRENDA" id="2.7.7.7">
    <property type="organism ID" value="13316"/>
</dbReference>
<dbReference type="GO" id="GO:0003677">
    <property type="term" value="F:DNA binding"/>
    <property type="evidence" value="ECO:0007669"/>
    <property type="project" value="UniProtKB-KW"/>
</dbReference>
<dbReference type="GO" id="GO:0003887">
    <property type="term" value="F:DNA-directed DNA polymerase activity"/>
    <property type="evidence" value="ECO:0007669"/>
    <property type="project" value="UniProtKB-KW"/>
</dbReference>
<dbReference type="GO" id="GO:0000166">
    <property type="term" value="F:nucleotide binding"/>
    <property type="evidence" value="ECO:0007669"/>
    <property type="project" value="InterPro"/>
</dbReference>
<dbReference type="GO" id="GO:0006261">
    <property type="term" value="P:DNA-templated DNA replication"/>
    <property type="evidence" value="ECO:0007669"/>
    <property type="project" value="TreeGrafter"/>
</dbReference>
<dbReference type="CDD" id="cd05783">
    <property type="entry name" value="DNA_polB_B1_exo"/>
    <property type="match status" value="1"/>
</dbReference>
<dbReference type="FunFam" id="1.10.287.690:FF:000011">
    <property type="entry name" value="DNA polymerase"/>
    <property type="match status" value="1"/>
</dbReference>
<dbReference type="Gene3D" id="1.10.287.1390">
    <property type="match status" value="2"/>
</dbReference>
<dbReference type="Gene3D" id="3.30.342.10">
    <property type="entry name" value="DNA Polymerase, chain B, domain 1"/>
    <property type="match status" value="1"/>
</dbReference>
<dbReference type="Gene3D" id="1.10.287.690">
    <property type="entry name" value="Helix hairpin bin"/>
    <property type="match status" value="1"/>
</dbReference>
<dbReference type="Gene3D" id="3.90.1600.10">
    <property type="entry name" value="Palm domain of DNA polymerase"/>
    <property type="match status" value="1"/>
</dbReference>
<dbReference type="Gene3D" id="3.30.420.10">
    <property type="entry name" value="Ribonuclease H-like superfamily/Ribonuclease H"/>
    <property type="match status" value="1"/>
</dbReference>
<dbReference type="InterPro" id="IPR006172">
    <property type="entry name" value="DNA-dir_DNA_pol_B"/>
</dbReference>
<dbReference type="InterPro" id="IPR017964">
    <property type="entry name" value="DNA-dir_DNA_pol_B_CS"/>
</dbReference>
<dbReference type="InterPro" id="IPR006133">
    <property type="entry name" value="DNA-dir_DNA_pol_B_exonuc"/>
</dbReference>
<dbReference type="InterPro" id="IPR006134">
    <property type="entry name" value="DNA-dir_DNA_pol_B_multi_dom"/>
</dbReference>
<dbReference type="InterPro" id="IPR043502">
    <property type="entry name" value="DNA/RNA_pol_sf"/>
</dbReference>
<dbReference type="InterPro" id="IPR023211">
    <property type="entry name" value="DNA_pol_palm_dom_sf"/>
</dbReference>
<dbReference type="InterPro" id="IPR050240">
    <property type="entry name" value="DNA_pol_type-B"/>
</dbReference>
<dbReference type="InterPro" id="IPR012337">
    <property type="entry name" value="RNaseH-like_sf"/>
</dbReference>
<dbReference type="InterPro" id="IPR036397">
    <property type="entry name" value="RNaseH_sf"/>
</dbReference>
<dbReference type="NCBIfam" id="NF004415">
    <property type="entry name" value="PRK05761.1-1"/>
    <property type="match status" value="1"/>
</dbReference>
<dbReference type="NCBIfam" id="NF004417">
    <property type="entry name" value="PRK05761.1-3"/>
    <property type="match status" value="1"/>
</dbReference>
<dbReference type="PANTHER" id="PTHR10322:SF20">
    <property type="entry name" value="DNA POLYMERASE 1"/>
    <property type="match status" value="1"/>
</dbReference>
<dbReference type="PANTHER" id="PTHR10322">
    <property type="entry name" value="DNA POLYMERASE CATALYTIC SUBUNIT"/>
    <property type="match status" value="1"/>
</dbReference>
<dbReference type="Pfam" id="PF00136">
    <property type="entry name" value="DNA_pol_B"/>
    <property type="match status" value="1"/>
</dbReference>
<dbReference type="Pfam" id="PF03104">
    <property type="entry name" value="DNA_pol_B_exo1"/>
    <property type="match status" value="1"/>
</dbReference>
<dbReference type="PRINTS" id="PR00106">
    <property type="entry name" value="DNAPOLB"/>
</dbReference>
<dbReference type="SMART" id="SM00486">
    <property type="entry name" value="POLBc"/>
    <property type="match status" value="1"/>
</dbReference>
<dbReference type="SUPFAM" id="SSF56672">
    <property type="entry name" value="DNA/RNA polymerases"/>
    <property type="match status" value="1"/>
</dbReference>
<dbReference type="SUPFAM" id="SSF53098">
    <property type="entry name" value="Ribonuclease H-like"/>
    <property type="match status" value="1"/>
</dbReference>
<dbReference type="PROSITE" id="PS00116">
    <property type="entry name" value="DNA_POLYMERASE_B"/>
    <property type="match status" value="1"/>
</dbReference>
<protein>
    <recommendedName>
        <fullName>DNA polymerase 1</fullName>
        <ecNumber>2.7.7.7</ecNumber>
    </recommendedName>
    <alternativeName>
        <fullName>DNA polymerase B1</fullName>
    </alternativeName>
    <alternativeName>
        <fullName>DNA polymerase I</fullName>
    </alternativeName>
</protein>
<feature type="chain" id="PRO_0000046487" description="DNA polymerase 1">
    <location>
        <begin position="1"/>
        <end position="872"/>
    </location>
</feature>
<gene>
    <name type="primary">pol-alpha</name>
</gene>
<name>DPOL1_SULOH</name>
<organism>
    <name type="scientific">Sulfurisphaera ohwakuensis</name>
    <dbReference type="NCBI Taxonomy" id="69656"/>
    <lineage>
        <taxon>Archaea</taxon>
        <taxon>Thermoproteota</taxon>
        <taxon>Thermoprotei</taxon>
        <taxon>Sulfolobales</taxon>
        <taxon>Sulfolobaceae</taxon>
        <taxon>Sulfurisphaera</taxon>
    </lineage>
</organism>